<sequence length="181" mass="20823">MNVIKTEIPDVLIFEPKVFGDERGFFMESFNQKVFEEAVGRKVEFVQDNHSKSTKGVLRGLHYQLEPYAQGKLVRCVVGEVFDVAVDIRKSSPTFGKWVGVNLSAENKRQLWIPEGFAHGFCVLSDEAEFVYKTNNFYSKMQERGILWSDKSINIEWPVQNPLLSDKDINGQKFVDADYFI</sequence>
<protein>
    <recommendedName>
        <fullName evidence="1">dTDP-4-dehydrorhamnose 3,5-epimerase</fullName>
        <ecNumber evidence="1">5.1.3.13</ecNumber>
    </recommendedName>
    <alternativeName>
        <fullName evidence="1">Thymidine diphospho-4-keto-rhamnose 3,5-epimerase</fullName>
    </alternativeName>
    <alternativeName>
        <fullName evidence="1">dTDP-4-keto-6-deoxyglucose 3,5-epimerase</fullName>
    </alternativeName>
    <alternativeName>
        <fullName evidence="1">dTDP-6-deoxy-D-xylo-4-hexulose 3,5-epimerase</fullName>
    </alternativeName>
    <alternativeName>
        <fullName evidence="1">dTDP-L-rhamnose synthase</fullName>
    </alternativeName>
</protein>
<dbReference type="EC" id="5.1.3.13" evidence="1"/>
<dbReference type="EMBL" id="X71970">
    <property type="protein sequence ID" value="CAA50770.1"/>
    <property type="molecule type" value="Genomic_DNA"/>
</dbReference>
<dbReference type="EMBL" id="L14842">
    <property type="protein sequence ID" value="AAA53682.1"/>
    <property type="molecule type" value="Genomic_DNA"/>
</dbReference>
<dbReference type="EMBL" id="AE005674">
    <property type="protein sequence ID" value="AAN43640.1"/>
    <property type="molecule type" value="Genomic_DNA"/>
</dbReference>
<dbReference type="EMBL" id="AE014073">
    <property type="protein sequence ID" value="AAP17469.1"/>
    <property type="molecule type" value="Genomic_DNA"/>
</dbReference>
<dbReference type="PIR" id="E55213">
    <property type="entry name" value="E55213"/>
</dbReference>
<dbReference type="RefSeq" id="NP_707933.1">
    <property type="nucleotide sequence ID" value="NC_004337.2"/>
</dbReference>
<dbReference type="RefSeq" id="WP_001100804.1">
    <property type="nucleotide sequence ID" value="NZ_WPGV01000030.1"/>
</dbReference>
<dbReference type="SMR" id="P37780"/>
<dbReference type="STRING" id="198214.SF2101"/>
<dbReference type="PaxDb" id="198214-SF2101"/>
<dbReference type="GeneID" id="1026775"/>
<dbReference type="KEGG" id="sfl:SF2101"/>
<dbReference type="KEGG" id="sfx:S2223"/>
<dbReference type="PATRIC" id="fig|198214.7.peg.2509"/>
<dbReference type="HOGENOM" id="CLU_090940_1_1_6"/>
<dbReference type="UniPathway" id="UPA00124"/>
<dbReference type="UniPathway" id="UPA00281"/>
<dbReference type="Proteomes" id="UP000001006">
    <property type="component" value="Chromosome"/>
</dbReference>
<dbReference type="Proteomes" id="UP000002673">
    <property type="component" value="Chromosome"/>
</dbReference>
<dbReference type="GO" id="GO:0005829">
    <property type="term" value="C:cytosol"/>
    <property type="evidence" value="ECO:0007669"/>
    <property type="project" value="TreeGrafter"/>
</dbReference>
<dbReference type="GO" id="GO:0008830">
    <property type="term" value="F:dTDP-4-dehydrorhamnose 3,5-epimerase activity"/>
    <property type="evidence" value="ECO:0000250"/>
    <property type="project" value="UniProtKB"/>
</dbReference>
<dbReference type="GO" id="GO:0019305">
    <property type="term" value="P:dTDP-rhamnose biosynthetic process"/>
    <property type="evidence" value="ECO:0007669"/>
    <property type="project" value="UniProtKB-UniPathway"/>
</dbReference>
<dbReference type="GO" id="GO:0009103">
    <property type="term" value="P:lipopolysaccharide biosynthetic process"/>
    <property type="evidence" value="ECO:0000250"/>
    <property type="project" value="UniProtKB"/>
</dbReference>
<dbReference type="GO" id="GO:0009243">
    <property type="term" value="P:O antigen biosynthetic process"/>
    <property type="evidence" value="ECO:0007669"/>
    <property type="project" value="UniProtKB-UniPathway"/>
</dbReference>
<dbReference type="GO" id="GO:0000271">
    <property type="term" value="P:polysaccharide biosynthetic process"/>
    <property type="evidence" value="ECO:0000250"/>
    <property type="project" value="UniProtKB"/>
</dbReference>
<dbReference type="CDD" id="cd00438">
    <property type="entry name" value="cupin_RmlC"/>
    <property type="match status" value="1"/>
</dbReference>
<dbReference type="FunFam" id="2.60.120.10:FF:000051">
    <property type="entry name" value="dTDP-4-dehydrorhamnose 3,5-epimerase"/>
    <property type="match status" value="1"/>
</dbReference>
<dbReference type="Gene3D" id="2.60.120.10">
    <property type="entry name" value="Jelly Rolls"/>
    <property type="match status" value="1"/>
</dbReference>
<dbReference type="InterPro" id="IPR000888">
    <property type="entry name" value="RmlC-like"/>
</dbReference>
<dbReference type="InterPro" id="IPR014710">
    <property type="entry name" value="RmlC-like_jellyroll"/>
</dbReference>
<dbReference type="InterPro" id="IPR011051">
    <property type="entry name" value="RmlC_Cupin_sf"/>
</dbReference>
<dbReference type="NCBIfam" id="TIGR01221">
    <property type="entry name" value="rmlC"/>
    <property type="match status" value="1"/>
</dbReference>
<dbReference type="PANTHER" id="PTHR21047">
    <property type="entry name" value="DTDP-6-DEOXY-D-GLUCOSE-3,5 EPIMERASE"/>
    <property type="match status" value="1"/>
</dbReference>
<dbReference type="PANTHER" id="PTHR21047:SF2">
    <property type="entry name" value="THYMIDINE DIPHOSPHO-4-KETO-RHAMNOSE 3,5-EPIMERASE"/>
    <property type="match status" value="1"/>
</dbReference>
<dbReference type="Pfam" id="PF00908">
    <property type="entry name" value="dTDP_sugar_isom"/>
    <property type="match status" value="1"/>
</dbReference>
<dbReference type="SUPFAM" id="SSF51182">
    <property type="entry name" value="RmlC-like cupins"/>
    <property type="match status" value="1"/>
</dbReference>
<feature type="chain" id="PRO_0000207980" description="dTDP-4-dehydrorhamnose 3,5-epimerase">
    <location>
        <begin position="1"/>
        <end position="181"/>
    </location>
</feature>
<feature type="active site" description="Proton acceptor" evidence="3">
    <location>
        <position position="62"/>
    </location>
</feature>
<feature type="active site" description="Proton donor" evidence="3">
    <location>
        <position position="132"/>
    </location>
</feature>
<feature type="binding site" evidence="3">
    <location>
        <position position="23"/>
    </location>
    <ligand>
        <name>substrate</name>
    </ligand>
</feature>
<feature type="binding site" evidence="3">
    <location>
        <position position="28"/>
    </location>
    <ligand>
        <name>substrate</name>
    </ligand>
</feature>
<feature type="binding site" evidence="3">
    <location>
        <begin position="47"/>
        <end position="49"/>
    </location>
    <ligand>
        <name>substrate</name>
    </ligand>
</feature>
<feature type="binding site" evidence="3">
    <location>
        <position position="59"/>
    </location>
    <ligand>
        <name>substrate</name>
    </ligand>
</feature>
<feature type="binding site" evidence="3">
    <location>
        <position position="72"/>
    </location>
    <ligand>
        <name>substrate</name>
    </ligand>
</feature>
<feature type="binding site" evidence="3">
    <location>
        <position position="119"/>
    </location>
    <ligand>
        <name>substrate</name>
    </ligand>
</feature>
<feature type="binding site" evidence="3">
    <location>
        <position position="143"/>
    </location>
    <ligand>
        <name>substrate</name>
    </ligand>
</feature>
<feature type="binding site" evidence="3">
    <location>
        <position position="167"/>
    </location>
    <ligand>
        <name>substrate</name>
    </ligand>
</feature>
<feature type="site" description="Participates in a stacking interaction with the thymidine ring of dTDP-4-oxo-6-deoxyglucose" evidence="2">
    <location>
        <position position="138"/>
    </location>
</feature>
<proteinExistence type="inferred from homology"/>
<organism>
    <name type="scientific">Shigella flexneri</name>
    <dbReference type="NCBI Taxonomy" id="623"/>
    <lineage>
        <taxon>Bacteria</taxon>
        <taxon>Pseudomonadati</taxon>
        <taxon>Pseudomonadota</taxon>
        <taxon>Gammaproteobacteria</taxon>
        <taxon>Enterobacterales</taxon>
        <taxon>Enterobacteriaceae</taxon>
        <taxon>Shigella</taxon>
    </lineage>
</organism>
<evidence type="ECO:0000250" key="1">
    <source>
        <dbReference type="UniProtKB" id="P26394"/>
    </source>
</evidence>
<evidence type="ECO:0000250" key="2">
    <source>
        <dbReference type="UniProtKB" id="Q5SFD1"/>
    </source>
</evidence>
<evidence type="ECO:0000250" key="3">
    <source>
        <dbReference type="UniProtKB" id="Q9HU21"/>
    </source>
</evidence>
<evidence type="ECO:0000305" key="4"/>
<gene>
    <name type="primary">rfbC</name>
    <name type="synonym">rmlC</name>
    <name type="ordered locus">SF2101</name>
    <name type="ordered locus">S2223</name>
</gene>
<name>RMLC_SHIFL</name>
<comment type="function">
    <text evidence="1">Catalyzes the epimerization of the C3' and C5'positions of dTDP-6-deoxy-D-xylo-4-hexulose, forming dTDP-6-deoxy-L-lyxo-4-hexulose.</text>
</comment>
<comment type="catalytic activity">
    <reaction evidence="1">
        <text>dTDP-4-dehydro-6-deoxy-alpha-D-glucose = dTDP-4-dehydro-beta-L-rhamnose</text>
        <dbReference type="Rhea" id="RHEA:16969"/>
        <dbReference type="ChEBI" id="CHEBI:57649"/>
        <dbReference type="ChEBI" id="CHEBI:62830"/>
        <dbReference type="EC" id="5.1.3.13"/>
    </reaction>
</comment>
<comment type="pathway">
    <text evidence="1">Carbohydrate biosynthesis; dTDP-L-rhamnose biosynthesis.</text>
</comment>
<comment type="pathway">
    <text evidence="1">Bacterial outer membrane biogenesis; LPS O-antigen biosynthesis.</text>
</comment>
<comment type="subunit">
    <text evidence="1">Homodimer.</text>
</comment>
<comment type="similarity">
    <text evidence="4">Belongs to the dTDP-4-dehydrorhamnose 3,5-epimerase family.</text>
</comment>
<accession>P37780</accession>
<reference key="1">
    <citation type="journal article" date="1994" name="Mol. Microbiol.">
        <title>Characterization of the dTDP-rhamnose biosynthetic genes encoded in the rfb locus of Shigella flexneri.</title>
        <authorList>
            <person name="Macpherson D.F."/>
            <person name="Manning P.A."/>
            <person name="Morona R."/>
        </authorList>
    </citation>
    <scope>NUCLEOTIDE SEQUENCE [GENOMIC DNA]</scope>
    <source>
        <strain>PE577 / Serotype 2a</strain>
    </source>
</reference>
<reference key="2">
    <citation type="journal article" date="1994" name="J. Bacteriol.">
        <title>Nucleotide sequence of the rhamnose biosynthetic operon of Shigella flexneri 2a and role of lipopolysaccharide in virulence.</title>
        <authorList>
            <person name="Rajakumar K."/>
            <person name="Jost B.H."/>
            <person name="Sasakawa C."/>
            <person name="Okada N."/>
            <person name="Yoshikawa M."/>
            <person name="Adler B."/>
        </authorList>
    </citation>
    <scope>NUCLEOTIDE SEQUENCE [GENOMIC DNA]</scope>
    <source>
        <strain>YSH6200 / Serotype 2a</strain>
    </source>
</reference>
<reference key="3">
    <citation type="journal article" date="2002" name="Nucleic Acids Res.">
        <title>Genome sequence of Shigella flexneri 2a: insights into pathogenicity through comparison with genomes of Escherichia coli K12 and O157.</title>
        <authorList>
            <person name="Jin Q."/>
            <person name="Yuan Z."/>
            <person name="Xu J."/>
            <person name="Wang Y."/>
            <person name="Shen Y."/>
            <person name="Lu W."/>
            <person name="Wang J."/>
            <person name="Liu H."/>
            <person name="Yang J."/>
            <person name="Yang F."/>
            <person name="Zhang X."/>
            <person name="Zhang J."/>
            <person name="Yang G."/>
            <person name="Wu H."/>
            <person name="Qu D."/>
            <person name="Dong J."/>
            <person name="Sun L."/>
            <person name="Xue Y."/>
            <person name="Zhao A."/>
            <person name="Gao Y."/>
            <person name="Zhu J."/>
            <person name="Kan B."/>
            <person name="Ding K."/>
            <person name="Chen S."/>
            <person name="Cheng H."/>
            <person name="Yao Z."/>
            <person name="He B."/>
            <person name="Chen R."/>
            <person name="Ma D."/>
            <person name="Qiang B."/>
            <person name="Wen Y."/>
            <person name="Hou Y."/>
            <person name="Yu J."/>
        </authorList>
    </citation>
    <scope>NUCLEOTIDE SEQUENCE [LARGE SCALE GENOMIC DNA]</scope>
    <source>
        <strain>301 / Serotype 2a</strain>
    </source>
</reference>
<reference key="4">
    <citation type="journal article" date="2003" name="Infect. Immun.">
        <title>Complete genome sequence and comparative genomics of Shigella flexneri serotype 2a strain 2457T.</title>
        <authorList>
            <person name="Wei J."/>
            <person name="Goldberg M.B."/>
            <person name="Burland V."/>
            <person name="Venkatesan M.M."/>
            <person name="Deng W."/>
            <person name="Fournier G."/>
            <person name="Mayhew G.F."/>
            <person name="Plunkett G. III"/>
            <person name="Rose D.J."/>
            <person name="Darling A."/>
            <person name="Mau B."/>
            <person name="Perna N.T."/>
            <person name="Payne S.M."/>
            <person name="Runyen-Janecky L.J."/>
            <person name="Zhou S."/>
            <person name="Schwartz D.C."/>
            <person name="Blattner F.R."/>
        </authorList>
    </citation>
    <scope>NUCLEOTIDE SEQUENCE [LARGE SCALE GENOMIC DNA]</scope>
    <source>
        <strain>ATCC 700930 / 2457T / Serotype 2a</strain>
    </source>
</reference>
<keyword id="KW-0119">Carbohydrate metabolism</keyword>
<keyword id="KW-0413">Isomerase</keyword>
<keyword id="KW-0448">Lipopolysaccharide biosynthesis</keyword>
<keyword id="KW-1185">Reference proteome</keyword>